<feature type="chain" id="PRO_0000391128" description="NADH-quinone oxidoreductase subunit N 1">
    <location>
        <begin position="1"/>
        <end position="475"/>
    </location>
</feature>
<feature type="transmembrane region" description="Helical" evidence="1">
    <location>
        <begin position="8"/>
        <end position="28"/>
    </location>
</feature>
<feature type="transmembrane region" description="Helical" evidence="1">
    <location>
        <begin position="36"/>
        <end position="56"/>
    </location>
</feature>
<feature type="transmembrane region" description="Helical" evidence="1">
    <location>
        <begin position="67"/>
        <end position="87"/>
    </location>
</feature>
<feature type="transmembrane region" description="Helical" evidence="1">
    <location>
        <begin position="100"/>
        <end position="120"/>
    </location>
</feature>
<feature type="transmembrane region" description="Helical" evidence="1">
    <location>
        <begin position="122"/>
        <end position="142"/>
    </location>
</feature>
<feature type="transmembrane region" description="Helical" evidence="1">
    <location>
        <begin position="157"/>
        <end position="177"/>
    </location>
</feature>
<feature type="transmembrane region" description="Helical" evidence="1">
    <location>
        <begin position="199"/>
        <end position="219"/>
    </location>
</feature>
<feature type="transmembrane region" description="Helical" evidence="1">
    <location>
        <begin position="244"/>
        <end position="264"/>
    </location>
</feature>
<feature type="transmembrane region" description="Helical" evidence="1">
    <location>
        <begin position="268"/>
        <end position="288"/>
    </location>
</feature>
<feature type="transmembrane region" description="Helical" evidence="1">
    <location>
        <begin position="295"/>
        <end position="315"/>
    </location>
</feature>
<feature type="transmembrane region" description="Helical" evidence="1">
    <location>
        <begin position="322"/>
        <end position="342"/>
    </location>
</feature>
<feature type="transmembrane region" description="Helical" evidence="1">
    <location>
        <begin position="366"/>
        <end position="386"/>
    </location>
</feature>
<feature type="transmembrane region" description="Helical" evidence="1">
    <location>
        <begin position="403"/>
        <end position="423"/>
    </location>
</feature>
<feature type="transmembrane region" description="Helical" evidence="1">
    <location>
        <begin position="443"/>
        <end position="463"/>
    </location>
</feature>
<comment type="function">
    <text evidence="1">NDH-1 shuttles electrons from NADH, via FMN and iron-sulfur (Fe-S) centers, to quinones in the respiratory chain. The immediate electron acceptor for the enzyme in this species is believed to be a menaquinone. Couples the redox reaction to proton translocation (for every two electrons transferred, four hydrogen ions are translocated across the cytoplasmic membrane), and thus conserves the redox energy in a proton gradient.</text>
</comment>
<comment type="catalytic activity">
    <reaction evidence="1">
        <text>a quinone + NADH + 5 H(+)(in) = a quinol + NAD(+) + 4 H(+)(out)</text>
        <dbReference type="Rhea" id="RHEA:57888"/>
        <dbReference type="ChEBI" id="CHEBI:15378"/>
        <dbReference type="ChEBI" id="CHEBI:24646"/>
        <dbReference type="ChEBI" id="CHEBI:57540"/>
        <dbReference type="ChEBI" id="CHEBI:57945"/>
        <dbReference type="ChEBI" id="CHEBI:132124"/>
    </reaction>
</comment>
<comment type="subunit">
    <text evidence="1">NDH-1 is composed of 14 different subunits. Subunits NuoA, H, J, K, L, M, N constitute the membrane sector of the complex.</text>
</comment>
<comment type="subcellular location">
    <subcellularLocation>
        <location evidence="1">Cell inner membrane</location>
        <topology evidence="1">Multi-pass membrane protein</topology>
    </subcellularLocation>
</comment>
<comment type="similarity">
    <text evidence="1">Belongs to the complex I subunit 2 family.</text>
</comment>
<proteinExistence type="inferred from homology"/>
<keyword id="KW-0997">Cell inner membrane</keyword>
<keyword id="KW-1003">Cell membrane</keyword>
<keyword id="KW-0472">Membrane</keyword>
<keyword id="KW-0520">NAD</keyword>
<keyword id="KW-0874">Quinone</keyword>
<keyword id="KW-1185">Reference proteome</keyword>
<keyword id="KW-1278">Translocase</keyword>
<keyword id="KW-0812">Transmembrane</keyword>
<keyword id="KW-1133">Transmembrane helix</keyword>
<keyword id="KW-0813">Transport</keyword>
<sequence length="475" mass="51537">MLEDFLKVMPLMTASGISILLILVEAATKNARITRLFAILGFLLVFLSLPFSPSEPDFAFSNMLQSGGFFTYTATVFSIGGLLITLISDKYLEMEDAHHGEYYIILFMAVVGMMLMSAAANLTILFIGLELMSIALYVLAGIMRDDQRSNEAAIKYFLLGAFASGIFLYGIALIYGATGTLYIPQISDHLAKNGFDTLFLSGIALLMIGLLFKVAAVPFHQWSPDVYEGSPTVATAFMATGAKAAALSSMILVGISIAPILETFTAWPTAIAMIATLTMFFGNIAALIQTNLKRMFAYSSIAHAGYMLIGIATGTDSGYAGVLYYIFLYTLMNIGAFGIIILVEQKHQFSELADYEGFFSRAPLLAFLMAMFMFSLAGIPPFGGFIAKYNVFSAAVQADMTWLAVAGVIASAVSVSYYLRVVIAMFMKDTKKQKLNPDPTATATIALVAFLVLLFGIYPSLLIEYTQHALAFAMK</sequence>
<organism>
    <name type="scientific">Chloroherpeton thalassium (strain ATCC 35110 / GB-78)</name>
    <dbReference type="NCBI Taxonomy" id="517418"/>
    <lineage>
        <taxon>Bacteria</taxon>
        <taxon>Pseudomonadati</taxon>
        <taxon>Chlorobiota</taxon>
        <taxon>Chlorobiia</taxon>
        <taxon>Chlorobiales</taxon>
        <taxon>Chloroherpetonaceae</taxon>
        <taxon>Chloroherpeton</taxon>
    </lineage>
</organism>
<protein>
    <recommendedName>
        <fullName evidence="1">NADH-quinone oxidoreductase subunit N 1</fullName>
        <ecNumber evidence="1">7.1.1.-</ecNumber>
    </recommendedName>
    <alternativeName>
        <fullName evidence="1">NADH dehydrogenase I subunit N 1</fullName>
    </alternativeName>
    <alternativeName>
        <fullName evidence="1">NDH-1 subunit N 1</fullName>
    </alternativeName>
</protein>
<accession>B3QXM3</accession>
<evidence type="ECO:0000255" key="1">
    <source>
        <dbReference type="HAMAP-Rule" id="MF_00445"/>
    </source>
</evidence>
<reference key="1">
    <citation type="submission" date="2008-06" db="EMBL/GenBank/DDBJ databases">
        <title>Complete sequence of Chloroherpeton thalassium ATCC 35110.</title>
        <authorList>
            <consortium name="US DOE Joint Genome Institute"/>
            <person name="Lucas S."/>
            <person name="Copeland A."/>
            <person name="Lapidus A."/>
            <person name="Glavina del Rio T."/>
            <person name="Dalin E."/>
            <person name="Tice H."/>
            <person name="Bruce D."/>
            <person name="Goodwin L."/>
            <person name="Pitluck S."/>
            <person name="Schmutz J."/>
            <person name="Larimer F."/>
            <person name="Land M."/>
            <person name="Hauser L."/>
            <person name="Kyrpides N."/>
            <person name="Mikhailova N."/>
            <person name="Liu Z."/>
            <person name="Li T."/>
            <person name="Zhao F."/>
            <person name="Overmann J."/>
            <person name="Bryant D.A."/>
            <person name="Richardson P."/>
        </authorList>
    </citation>
    <scope>NUCLEOTIDE SEQUENCE [LARGE SCALE GENOMIC DNA]</scope>
    <source>
        <strain>ATCC 35110 / GB-78</strain>
    </source>
</reference>
<name>NUON1_CHLT3</name>
<dbReference type="EC" id="7.1.1.-" evidence="1"/>
<dbReference type="EMBL" id="CP001100">
    <property type="protein sequence ID" value="ACF14938.1"/>
    <property type="molecule type" value="Genomic_DNA"/>
</dbReference>
<dbReference type="RefSeq" id="WP_012501020.1">
    <property type="nucleotide sequence ID" value="NC_011026.1"/>
</dbReference>
<dbReference type="SMR" id="B3QXM3"/>
<dbReference type="STRING" id="517418.Ctha_2489"/>
<dbReference type="KEGG" id="cts:Ctha_2489"/>
<dbReference type="eggNOG" id="COG1007">
    <property type="taxonomic scope" value="Bacteria"/>
</dbReference>
<dbReference type="HOGENOM" id="CLU_007100_1_5_10"/>
<dbReference type="OrthoDB" id="9811718at2"/>
<dbReference type="Proteomes" id="UP000001208">
    <property type="component" value="Chromosome"/>
</dbReference>
<dbReference type="GO" id="GO:0005886">
    <property type="term" value="C:plasma membrane"/>
    <property type="evidence" value="ECO:0007669"/>
    <property type="project" value="UniProtKB-SubCell"/>
</dbReference>
<dbReference type="GO" id="GO:0008137">
    <property type="term" value="F:NADH dehydrogenase (ubiquinone) activity"/>
    <property type="evidence" value="ECO:0007669"/>
    <property type="project" value="InterPro"/>
</dbReference>
<dbReference type="GO" id="GO:0050136">
    <property type="term" value="F:NADH:ubiquinone reductase (non-electrogenic) activity"/>
    <property type="evidence" value="ECO:0007669"/>
    <property type="project" value="UniProtKB-UniRule"/>
</dbReference>
<dbReference type="GO" id="GO:0048038">
    <property type="term" value="F:quinone binding"/>
    <property type="evidence" value="ECO:0007669"/>
    <property type="project" value="UniProtKB-KW"/>
</dbReference>
<dbReference type="GO" id="GO:0042773">
    <property type="term" value="P:ATP synthesis coupled electron transport"/>
    <property type="evidence" value="ECO:0007669"/>
    <property type="project" value="InterPro"/>
</dbReference>
<dbReference type="HAMAP" id="MF_00445">
    <property type="entry name" value="NDH1_NuoN_1"/>
    <property type="match status" value="1"/>
</dbReference>
<dbReference type="InterPro" id="IPR010096">
    <property type="entry name" value="NADH-Q_OxRdtase_suN/2"/>
</dbReference>
<dbReference type="InterPro" id="IPR001750">
    <property type="entry name" value="ND/Mrp_TM"/>
</dbReference>
<dbReference type="NCBIfam" id="TIGR01770">
    <property type="entry name" value="NDH_I_N"/>
    <property type="match status" value="1"/>
</dbReference>
<dbReference type="PANTHER" id="PTHR22773">
    <property type="entry name" value="NADH DEHYDROGENASE"/>
    <property type="match status" value="1"/>
</dbReference>
<dbReference type="Pfam" id="PF00361">
    <property type="entry name" value="Proton_antipo_M"/>
    <property type="match status" value="1"/>
</dbReference>
<dbReference type="PRINTS" id="PR01434">
    <property type="entry name" value="NADHDHGNASE5"/>
</dbReference>
<gene>
    <name evidence="1" type="primary">nuoN1</name>
    <name type="ordered locus">Ctha_2489</name>
</gene>